<accession>Q1ACP2</accession>
<sequence length="156" mass="17897">MSRRKIPIKRSPKPDSIYRSRLVNMMVNRILKNGKKSLASHILYNAMKEIKHKTKKNPSLILRQAVVRATPKITIKARRIGGSNYQVPVEIKPEKGHSLAIRWLLTASRKRTGKNMVFKLANELLDAAKDTGGAIRKKEETHRMAEANRAFAHFRY</sequence>
<feature type="chain" id="PRO_0000277033" description="Small ribosomal subunit protein uS7c">
    <location>
        <begin position="1"/>
        <end position="156"/>
    </location>
</feature>
<reference key="1">
    <citation type="journal article" date="2006" name="Mol. Biol. Evol.">
        <title>The chloroplast genome sequence of Chara vulgaris sheds new light into the closest green algal relatives of land plants.</title>
        <authorList>
            <person name="Turmel M."/>
            <person name="Otis C."/>
            <person name="Lemieux C."/>
        </authorList>
    </citation>
    <scope>NUCLEOTIDE SEQUENCE [LARGE SCALE GENOMIC DNA]</scope>
</reference>
<evidence type="ECO:0000250" key="1"/>
<evidence type="ECO:0000305" key="2"/>
<organism>
    <name type="scientific">Chara vulgaris</name>
    <name type="common">Common stonewort</name>
    <dbReference type="NCBI Taxonomy" id="55564"/>
    <lineage>
        <taxon>Eukaryota</taxon>
        <taxon>Viridiplantae</taxon>
        <taxon>Streptophyta</taxon>
        <taxon>Charophyceae</taxon>
        <taxon>Charales</taxon>
        <taxon>Characeae</taxon>
        <taxon>Chara</taxon>
    </lineage>
</organism>
<comment type="function">
    <text evidence="1">One of the primary rRNA binding proteins, it binds directly to 16S rRNA where it nucleates assembly of the head domain of the 30S subunit.</text>
</comment>
<comment type="subunit">
    <text>Part of the 30S ribosomal subunit.</text>
</comment>
<comment type="subcellular location">
    <subcellularLocation>
        <location>Plastid</location>
        <location>Chloroplast</location>
    </subcellularLocation>
</comment>
<comment type="similarity">
    <text evidence="2">Belongs to the universal ribosomal protein uS7 family.</text>
</comment>
<gene>
    <name type="primary">rps7</name>
</gene>
<protein>
    <recommendedName>
        <fullName evidence="2">Small ribosomal subunit protein uS7c</fullName>
    </recommendedName>
    <alternativeName>
        <fullName>30S ribosomal protein S7, chloroplastic</fullName>
    </alternativeName>
</protein>
<proteinExistence type="inferred from homology"/>
<dbReference type="EMBL" id="DQ229107">
    <property type="protein sequence ID" value="ABA61968.1"/>
    <property type="molecule type" value="Genomic_DNA"/>
</dbReference>
<dbReference type="RefSeq" id="YP_635705.1">
    <property type="nucleotide sequence ID" value="NC_008097.1"/>
</dbReference>
<dbReference type="SMR" id="Q1ACP2"/>
<dbReference type="GeneID" id="4100339"/>
<dbReference type="GO" id="GO:0009507">
    <property type="term" value="C:chloroplast"/>
    <property type="evidence" value="ECO:0007669"/>
    <property type="project" value="UniProtKB-SubCell"/>
</dbReference>
<dbReference type="GO" id="GO:0015935">
    <property type="term" value="C:small ribosomal subunit"/>
    <property type="evidence" value="ECO:0007669"/>
    <property type="project" value="InterPro"/>
</dbReference>
<dbReference type="GO" id="GO:0019843">
    <property type="term" value="F:rRNA binding"/>
    <property type="evidence" value="ECO:0007669"/>
    <property type="project" value="UniProtKB-UniRule"/>
</dbReference>
<dbReference type="GO" id="GO:0003735">
    <property type="term" value="F:structural constituent of ribosome"/>
    <property type="evidence" value="ECO:0007669"/>
    <property type="project" value="InterPro"/>
</dbReference>
<dbReference type="GO" id="GO:0006412">
    <property type="term" value="P:translation"/>
    <property type="evidence" value="ECO:0007669"/>
    <property type="project" value="UniProtKB-UniRule"/>
</dbReference>
<dbReference type="CDD" id="cd14871">
    <property type="entry name" value="uS7_Chloroplast"/>
    <property type="match status" value="1"/>
</dbReference>
<dbReference type="FunFam" id="1.10.455.10:FF:000001">
    <property type="entry name" value="30S ribosomal protein S7"/>
    <property type="match status" value="1"/>
</dbReference>
<dbReference type="Gene3D" id="1.10.455.10">
    <property type="entry name" value="Ribosomal protein S7 domain"/>
    <property type="match status" value="1"/>
</dbReference>
<dbReference type="HAMAP" id="MF_00480_B">
    <property type="entry name" value="Ribosomal_uS7_B"/>
    <property type="match status" value="1"/>
</dbReference>
<dbReference type="InterPro" id="IPR000235">
    <property type="entry name" value="Ribosomal_uS7"/>
</dbReference>
<dbReference type="InterPro" id="IPR005717">
    <property type="entry name" value="Ribosomal_uS7_bac/org-type"/>
</dbReference>
<dbReference type="InterPro" id="IPR020606">
    <property type="entry name" value="Ribosomal_uS7_CS"/>
</dbReference>
<dbReference type="InterPro" id="IPR023798">
    <property type="entry name" value="Ribosomal_uS7_dom"/>
</dbReference>
<dbReference type="InterPro" id="IPR036823">
    <property type="entry name" value="Ribosomal_uS7_dom_sf"/>
</dbReference>
<dbReference type="NCBIfam" id="TIGR01029">
    <property type="entry name" value="rpsG_bact"/>
    <property type="match status" value="1"/>
</dbReference>
<dbReference type="PANTHER" id="PTHR11205">
    <property type="entry name" value="RIBOSOMAL PROTEIN S7"/>
    <property type="match status" value="1"/>
</dbReference>
<dbReference type="Pfam" id="PF00177">
    <property type="entry name" value="Ribosomal_S7"/>
    <property type="match status" value="1"/>
</dbReference>
<dbReference type="PIRSF" id="PIRSF002122">
    <property type="entry name" value="RPS7p_RPS7a_RPS5e_RPS7o"/>
    <property type="match status" value="1"/>
</dbReference>
<dbReference type="SUPFAM" id="SSF47973">
    <property type="entry name" value="Ribosomal protein S7"/>
    <property type="match status" value="1"/>
</dbReference>
<dbReference type="PROSITE" id="PS00052">
    <property type="entry name" value="RIBOSOMAL_S7"/>
    <property type="match status" value="1"/>
</dbReference>
<geneLocation type="chloroplast"/>
<name>RR7_CHAVU</name>
<keyword id="KW-0150">Chloroplast</keyword>
<keyword id="KW-0934">Plastid</keyword>
<keyword id="KW-0687">Ribonucleoprotein</keyword>
<keyword id="KW-0689">Ribosomal protein</keyword>
<keyword id="KW-0694">RNA-binding</keyword>
<keyword id="KW-0699">rRNA-binding</keyword>